<name>DDX41_DROME</name>
<evidence type="ECO:0000255" key="1">
    <source>
        <dbReference type="PROSITE-ProRule" id="PRU00047"/>
    </source>
</evidence>
<evidence type="ECO:0000255" key="2">
    <source>
        <dbReference type="PROSITE-ProRule" id="PRU00541"/>
    </source>
</evidence>
<evidence type="ECO:0000255" key="3">
    <source>
        <dbReference type="PROSITE-ProRule" id="PRU00542"/>
    </source>
</evidence>
<evidence type="ECO:0000256" key="4">
    <source>
        <dbReference type="SAM" id="MobiDB-lite"/>
    </source>
</evidence>
<evidence type="ECO:0000269" key="5">
    <source>
    </source>
</evidence>
<evidence type="ECO:0000305" key="6"/>
<feature type="chain" id="PRO_0000054974" description="ATP-dependent RNA helicase abstrakt">
    <location>
        <begin position="1"/>
        <end position="619"/>
    </location>
</feature>
<feature type="domain" description="Helicase ATP-binding" evidence="2">
    <location>
        <begin position="208"/>
        <end position="392"/>
    </location>
</feature>
<feature type="domain" description="Helicase C-terminal" evidence="3">
    <location>
        <begin position="403"/>
        <end position="563"/>
    </location>
</feature>
<feature type="zinc finger region" description="CCHC-type" evidence="1">
    <location>
        <begin position="577"/>
        <end position="594"/>
    </location>
</feature>
<feature type="region of interest" description="Disordered" evidence="4">
    <location>
        <begin position="1"/>
        <end position="25"/>
    </location>
</feature>
<feature type="region of interest" description="Disordered" evidence="4">
    <location>
        <begin position="50"/>
        <end position="69"/>
    </location>
</feature>
<feature type="short sequence motif" description="Q motif">
    <location>
        <begin position="177"/>
        <end position="205"/>
    </location>
</feature>
<feature type="short sequence motif" description="DEAD box">
    <location>
        <begin position="340"/>
        <end position="343"/>
    </location>
</feature>
<feature type="compositionally biased region" description="Basic residues" evidence="4">
    <location>
        <begin position="1"/>
        <end position="11"/>
    </location>
</feature>
<feature type="binding site" evidence="2">
    <location>
        <begin position="221"/>
        <end position="228"/>
    </location>
    <ligand>
        <name>ATP</name>
        <dbReference type="ChEBI" id="CHEBI:30616"/>
    </ligand>
</feature>
<feature type="modified residue" description="Phosphoserine" evidence="5">
    <location>
        <position position="11"/>
    </location>
</feature>
<feature type="modified residue" description="Phosphoserine" evidence="5">
    <location>
        <position position="13"/>
    </location>
</feature>
<feature type="modified residue" description="Phosphoserine" evidence="5">
    <location>
        <position position="14"/>
    </location>
</feature>
<feature type="modified residue" description="Phosphoserine" evidence="5">
    <location>
        <position position="56"/>
    </location>
</feature>
<feature type="modified residue" description="Phosphoserine" evidence="5">
    <location>
        <position position="57"/>
    </location>
</feature>
<feature type="modified residue" description="Phosphoserine" evidence="5">
    <location>
        <position position="58"/>
    </location>
</feature>
<feature type="modified residue" description="Phosphoserine" evidence="5">
    <location>
        <position position="66"/>
    </location>
</feature>
<feature type="sequence variant" description="In allele 14B; temperature sensitive.">
    <original>E</original>
    <variation>K</variation>
    <location>
        <position position="241"/>
    </location>
</feature>
<feature type="sequence variant" description="In allele 33B; temperature sensitive.">
    <original>V</original>
    <variation>M</variation>
    <location>
        <position position="431"/>
    </location>
</feature>
<feature type="sequence conflict" description="In Ref. 2; AAF04040." evidence="6" ref="2">
    <original>K</original>
    <variation>Q</variation>
    <location>
        <position position="5"/>
    </location>
</feature>
<feature type="sequence conflict" description="In Ref. 2." evidence="6" ref="2">
    <location>
        <begin position="26"/>
        <end position="30"/>
    </location>
</feature>
<keyword id="KW-0067">ATP-binding</keyword>
<keyword id="KW-0347">Helicase</keyword>
<keyword id="KW-0378">Hydrolase</keyword>
<keyword id="KW-0479">Metal-binding</keyword>
<keyword id="KW-0547">Nucleotide-binding</keyword>
<keyword id="KW-0539">Nucleus</keyword>
<keyword id="KW-0597">Phosphoprotein</keyword>
<keyword id="KW-1185">Reference proteome</keyword>
<keyword id="KW-0694">RNA-binding</keyword>
<keyword id="KW-0862">Zinc</keyword>
<keyword id="KW-0863">Zinc-finger</keyword>
<protein>
    <recommendedName>
        <fullName>ATP-dependent RNA helicase abstrakt</fullName>
        <shortName>DEAD box protein abstrakt</shortName>
        <ecNumber>3.6.4.13</ecNumber>
    </recommendedName>
</protein>
<reference key="1">
    <citation type="journal article" date="2000" name="Mech. Dev.">
        <title>The Drosophila gene abstrakt, required for visual system development, encodes a putative RNA helicase of the DEAD box protein family.</title>
        <authorList>
            <person name="Schmucker D."/>
            <person name="Vorbrueggen G."/>
            <person name="Yeghiayan P."/>
            <person name="Fan H.Q."/>
            <person name="Jaeckle H."/>
            <person name="Gaul U."/>
        </authorList>
    </citation>
    <scope>NUCLEOTIDE SEQUENCE [MRNA]</scope>
</reference>
<reference key="2">
    <citation type="journal article" date="1999" name="Curr. Biol.">
        <title>Developmental and cell biological functions of the Drosophila DEAD-box protein abstrakt.</title>
        <authorList>
            <person name="Irion U."/>
            <person name="Leptin M."/>
        </authorList>
    </citation>
    <scope>NUCLEOTIDE SEQUENCE [GENOMIC DNA]</scope>
    <scope>VARIANTS 14B AND 33B</scope>
</reference>
<reference key="3">
    <citation type="journal article" date="2000" name="Science">
        <title>The genome sequence of Drosophila melanogaster.</title>
        <authorList>
            <person name="Adams M.D."/>
            <person name="Celniker S.E."/>
            <person name="Holt R.A."/>
            <person name="Evans C.A."/>
            <person name="Gocayne J.D."/>
            <person name="Amanatides P.G."/>
            <person name="Scherer S.E."/>
            <person name="Li P.W."/>
            <person name="Hoskins R.A."/>
            <person name="Galle R.F."/>
            <person name="George R.A."/>
            <person name="Lewis S.E."/>
            <person name="Richards S."/>
            <person name="Ashburner M."/>
            <person name="Henderson S.N."/>
            <person name="Sutton G.G."/>
            <person name="Wortman J.R."/>
            <person name="Yandell M.D."/>
            <person name="Zhang Q."/>
            <person name="Chen L.X."/>
            <person name="Brandon R.C."/>
            <person name="Rogers Y.-H.C."/>
            <person name="Blazej R.G."/>
            <person name="Champe M."/>
            <person name="Pfeiffer B.D."/>
            <person name="Wan K.H."/>
            <person name="Doyle C."/>
            <person name="Baxter E.G."/>
            <person name="Helt G."/>
            <person name="Nelson C.R."/>
            <person name="Miklos G.L.G."/>
            <person name="Abril J.F."/>
            <person name="Agbayani A."/>
            <person name="An H.-J."/>
            <person name="Andrews-Pfannkoch C."/>
            <person name="Baldwin D."/>
            <person name="Ballew R.M."/>
            <person name="Basu A."/>
            <person name="Baxendale J."/>
            <person name="Bayraktaroglu L."/>
            <person name="Beasley E.M."/>
            <person name="Beeson K.Y."/>
            <person name="Benos P.V."/>
            <person name="Berman B.P."/>
            <person name="Bhandari D."/>
            <person name="Bolshakov S."/>
            <person name="Borkova D."/>
            <person name="Botchan M.R."/>
            <person name="Bouck J."/>
            <person name="Brokstein P."/>
            <person name="Brottier P."/>
            <person name="Burtis K.C."/>
            <person name="Busam D.A."/>
            <person name="Butler H."/>
            <person name="Cadieu E."/>
            <person name="Center A."/>
            <person name="Chandra I."/>
            <person name="Cherry J.M."/>
            <person name="Cawley S."/>
            <person name="Dahlke C."/>
            <person name="Davenport L.B."/>
            <person name="Davies P."/>
            <person name="de Pablos B."/>
            <person name="Delcher A."/>
            <person name="Deng Z."/>
            <person name="Mays A.D."/>
            <person name="Dew I."/>
            <person name="Dietz S.M."/>
            <person name="Dodson K."/>
            <person name="Doup L.E."/>
            <person name="Downes M."/>
            <person name="Dugan-Rocha S."/>
            <person name="Dunkov B.C."/>
            <person name="Dunn P."/>
            <person name="Durbin K.J."/>
            <person name="Evangelista C.C."/>
            <person name="Ferraz C."/>
            <person name="Ferriera S."/>
            <person name="Fleischmann W."/>
            <person name="Fosler C."/>
            <person name="Gabrielian A.E."/>
            <person name="Garg N.S."/>
            <person name="Gelbart W.M."/>
            <person name="Glasser K."/>
            <person name="Glodek A."/>
            <person name="Gong F."/>
            <person name="Gorrell J.H."/>
            <person name="Gu Z."/>
            <person name="Guan P."/>
            <person name="Harris M."/>
            <person name="Harris N.L."/>
            <person name="Harvey D.A."/>
            <person name="Heiman T.J."/>
            <person name="Hernandez J.R."/>
            <person name="Houck J."/>
            <person name="Hostin D."/>
            <person name="Houston K.A."/>
            <person name="Howland T.J."/>
            <person name="Wei M.-H."/>
            <person name="Ibegwam C."/>
            <person name="Jalali M."/>
            <person name="Kalush F."/>
            <person name="Karpen G.H."/>
            <person name="Ke Z."/>
            <person name="Kennison J.A."/>
            <person name="Ketchum K.A."/>
            <person name="Kimmel B.E."/>
            <person name="Kodira C.D."/>
            <person name="Kraft C.L."/>
            <person name="Kravitz S."/>
            <person name="Kulp D."/>
            <person name="Lai Z."/>
            <person name="Lasko P."/>
            <person name="Lei Y."/>
            <person name="Levitsky A.A."/>
            <person name="Li J.H."/>
            <person name="Li Z."/>
            <person name="Liang Y."/>
            <person name="Lin X."/>
            <person name="Liu X."/>
            <person name="Mattei B."/>
            <person name="McIntosh T.C."/>
            <person name="McLeod M.P."/>
            <person name="McPherson D."/>
            <person name="Merkulov G."/>
            <person name="Milshina N.V."/>
            <person name="Mobarry C."/>
            <person name="Morris J."/>
            <person name="Moshrefi A."/>
            <person name="Mount S.M."/>
            <person name="Moy M."/>
            <person name="Murphy B."/>
            <person name="Murphy L."/>
            <person name="Muzny D.M."/>
            <person name="Nelson D.L."/>
            <person name="Nelson D.R."/>
            <person name="Nelson K.A."/>
            <person name="Nixon K."/>
            <person name="Nusskern D.R."/>
            <person name="Pacleb J.M."/>
            <person name="Palazzolo M."/>
            <person name="Pittman G.S."/>
            <person name="Pan S."/>
            <person name="Pollard J."/>
            <person name="Puri V."/>
            <person name="Reese M.G."/>
            <person name="Reinert K."/>
            <person name="Remington K."/>
            <person name="Saunders R.D.C."/>
            <person name="Scheeler F."/>
            <person name="Shen H."/>
            <person name="Shue B.C."/>
            <person name="Siden-Kiamos I."/>
            <person name="Simpson M."/>
            <person name="Skupski M.P."/>
            <person name="Smith T.J."/>
            <person name="Spier E."/>
            <person name="Spradling A.C."/>
            <person name="Stapleton M."/>
            <person name="Strong R."/>
            <person name="Sun E."/>
            <person name="Svirskas R."/>
            <person name="Tector C."/>
            <person name="Turner R."/>
            <person name="Venter E."/>
            <person name="Wang A.H."/>
            <person name="Wang X."/>
            <person name="Wang Z.-Y."/>
            <person name="Wassarman D.A."/>
            <person name="Weinstock G.M."/>
            <person name="Weissenbach J."/>
            <person name="Williams S.M."/>
            <person name="Woodage T."/>
            <person name="Worley K.C."/>
            <person name="Wu D."/>
            <person name="Yang S."/>
            <person name="Yao Q.A."/>
            <person name="Ye J."/>
            <person name="Yeh R.-F."/>
            <person name="Zaveri J.S."/>
            <person name="Zhan M."/>
            <person name="Zhang G."/>
            <person name="Zhao Q."/>
            <person name="Zheng L."/>
            <person name="Zheng X.H."/>
            <person name="Zhong F.N."/>
            <person name="Zhong W."/>
            <person name="Zhou X."/>
            <person name="Zhu S.C."/>
            <person name="Zhu X."/>
            <person name="Smith H.O."/>
            <person name="Gibbs R.A."/>
            <person name="Myers E.W."/>
            <person name="Rubin G.M."/>
            <person name="Venter J.C."/>
        </authorList>
    </citation>
    <scope>NUCLEOTIDE SEQUENCE [LARGE SCALE GENOMIC DNA]</scope>
    <source>
        <strain>Berkeley</strain>
    </source>
</reference>
<reference key="4">
    <citation type="journal article" date="2002" name="Genome Biol.">
        <title>Annotation of the Drosophila melanogaster euchromatic genome: a systematic review.</title>
        <authorList>
            <person name="Misra S."/>
            <person name="Crosby M.A."/>
            <person name="Mungall C.J."/>
            <person name="Matthews B.B."/>
            <person name="Campbell K.S."/>
            <person name="Hradecky P."/>
            <person name="Huang Y."/>
            <person name="Kaminker J.S."/>
            <person name="Millburn G.H."/>
            <person name="Prochnik S.E."/>
            <person name="Smith C.D."/>
            <person name="Tupy J.L."/>
            <person name="Whitfield E.J."/>
            <person name="Bayraktaroglu L."/>
            <person name="Berman B.P."/>
            <person name="Bettencourt B.R."/>
            <person name="Celniker S.E."/>
            <person name="de Grey A.D.N.J."/>
            <person name="Drysdale R.A."/>
            <person name="Harris N.L."/>
            <person name="Richter J."/>
            <person name="Russo S."/>
            <person name="Schroeder A.J."/>
            <person name="Shu S.Q."/>
            <person name="Stapleton M."/>
            <person name="Yamada C."/>
            <person name="Ashburner M."/>
            <person name="Gelbart W.M."/>
            <person name="Rubin G.M."/>
            <person name="Lewis S.E."/>
        </authorList>
    </citation>
    <scope>GENOME REANNOTATION</scope>
    <source>
        <strain>Berkeley</strain>
    </source>
</reference>
<reference key="5">
    <citation type="journal article" date="2002" name="Genome Biol.">
        <title>A Drosophila full-length cDNA resource.</title>
        <authorList>
            <person name="Stapleton M."/>
            <person name="Carlson J.W."/>
            <person name="Brokstein P."/>
            <person name="Yu C."/>
            <person name="Champe M."/>
            <person name="George R.A."/>
            <person name="Guarin H."/>
            <person name="Kronmiller B."/>
            <person name="Pacleb J.M."/>
            <person name="Park S."/>
            <person name="Wan K.H."/>
            <person name="Rubin G.M."/>
            <person name="Celniker S.E."/>
        </authorList>
    </citation>
    <scope>NUCLEOTIDE SEQUENCE [LARGE SCALE MRNA]</scope>
    <source>
        <strain>Berkeley</strain>
        <tissue>Embryo</tissue>
    </source>
</reference>
<reference key="6">
    <citation type="journal article" date="2008" name="J. Proteome Res.">
        <title>Phosphoproteome analysis of Drosophila melanogaster embryos.</title>
        <authorList>
            <person name="Zhai B."/>
            <person name="Villen J."/>
            <person name="Beausoleil S.A."/>
            <person name="Mintseris J."/>
            <person name="Gygi S.P."/>
        </authorList>
    </citation>
    <scope>PHOSPHORYLATION [LARGE SCALE ANALYSIS] AT SER-11; SER-13; SER-14; SER-56; SER-57; SER-58 AND SER-66</scope>
    <scope>IDENTIFICATION BY MASS SPECTROMETRY</scope>
    <source>
        <tissue>Embryo</tissue>
    </source>
</reference>
<gene>
    <name type="primary">abs</name>
    <name type="ORF">CG14637</name>
</gene>
<accession>Q9V3C0</accession>
<accession>Q9U6D0</accession>
<dbReference type="EC" id="3.6.4.13"/>
<dbReference type="EMBL" id="AF212866">
    <property type="protein sequence ID" value="AAF19985.1"/>
    <property type="molecule type" value="mRNA"/>
</dbReference>
<dbReference type="EMBL" id="AF187729">
    <property type="protein sequence ID" value="AAF04040.1"/>
    <property type="molecule type" value="Genomic_DNA"/>
</dbReference>
<dbReference type="EMBL" id="AE014297">
    <property type="protein sequence ID" value="AAF52165.1"/>
    <property type="molecule type" value="Genomic_DNA"/>
</dbReference>
<dbReference type="EMBL" id="AY051752">
    <property type="protein sequence ID" value="AAK93176.1"/>
    <property type="molecule type" value="mRNA"/>
</dbReference>
<dbReference type="RefSeq" id="NP_524220.1">
    <property type="nucleotide sequence ID" value="NM_079496.4"/>
</dbReference>
<dbReference type="SMR" id="Q9V3C0"/>
<dbReference type="BioGRID" id="65752">
    <property type="interactions" value="20"/>
</dbReference>
<dbReference type="DIP" id="DIP-21861N"/>
<dbReference type="FunCoup" id="Q9V3C0">
    <property type="interactions" value="2422"/>
</dbReference>
<dbReference type="IntAct" id="Q9V3C0">
    <property type="interactions" value="16"/>
</dbReference>
<dbReference type="STRING" id="7227.FBpp0078606"/>
<dbReference type="iPTMnet" id="Q9V3C0"/>
<dbReference type="PaxDb" id="7227-FBpp0078606"/>
<dbReference type="DNASU" id="40530"/>
<dbReference type="EnsemblMetazoa" id="FBtr0078967">
    <property type="protein sequence ID" value="FBpp0078606"/>
    <property type="gene ID" value="FBgn0015331"/>
</dbReference>
<dbReference type="GeneID" id="40530"/>
<dbReference type="KEGG" id="dme:Dmel_CG14637"/>
<dbReference type="UCSC" id="CG14637-RA">
    <property type="organism name" value="d. melanogaster"/>
</dbReference>
<dbReference type="AGR" id="FB:FBgn0015331"/>
<dbReference type="CTD" id="40530"/>
<dbReference type="FlyBase" id="FBgn0015331">
    <property type="gene designation" value="abs"/>
</dbReference>
<dbReference type="VEuPathDB" id="VectorBase:FBgn0015331"/>
<dbReference type="eggNOG" id="KOG0341">
    <property type="taxonomic scope" value="Eukaryota"/>
</dbReference>
<dbReference type="GeneTree" id="ENSGT00940000156333"/>
<dbReference type="HOGENOM" id="CLU_003041_16_5_1"/>
<dbReference type="InParanoid" id="Q9V3C0"/>
<dbReference type="OMA" id="FKTIWTL"/>
<dbReference type="OrthoDB" id="196131at2759"/>
<dbReference type="PhylomeDB" id="Q9V3C0"/>
<dbReference type="Reactome" id="R-DME-1834941">
    <property type="pathway name" value="STING mediated induction of host immune responses"/>
</dbReference>
<dbReference type="Reactome" id="R-DME-72163">
    <property type="pathway name" value="mRNA Splicing - Major Pathway"/>
</dbReference>
<dbReference type="SignaLink" id="Q9V3C0"/>
<dbReference type="BioGRID-ORCS" id="40530">
    <property type="hits" value="0 hits in 1 CRISPR screen"/>
</dbReference>
<dbReference type="GenomeRNAi" id="40530"/>
<dbReference type="PRO" id="PR:Q9V3C0"/>
<dbReference type="Proteomes" id="UP000000803">
    <property type="component" value="Chromosome 3R"/>
</dbReference>
<dbReference type="Bgee" id="FBgn0015331">
    <property type="expression patterns" value="Expressed in nurse follicle cell (Drosophila) in ovary and 90 other cell types or tissues"/>
</dbReference>
<dbReference type="GO" id="GO:0071013">
    <property type="term" value="C:catalytic step 2 spliceosome"/>
    <property type="evidence" value="ECO:0007005"/>
    <property type="project" value="FlyBase"/>
</dbReference>
<dbReference type="GO" id="GO:0071011">
    <property type="term" value="C:precatalytic spliceosome"/>
    <property type="evidence" value="ECO:0007005"/>
    <property type="project" value="FlyBase"/>
</dbReference>
<dbReference type="GO" id="GO:0005681">
    <property type="term" value="C:spliceosomal complex"/>
    <property type="evidence" value="ECO:0000318"/>
    <property type="project" value="GO_Central"/>
</dbReference>
<dbReference type="GO" id="GO:0005524">
    <property type="term" value="F:ATP binding"/>
    <property type="evidence" value="ECO:0007669"/>
    <property type="project" value="UniProtKB-KW"/>
</dbReference>
<dbReference type="GO" id="GO:0016887">
    <property type="term" value="F:ATP hydrolysis activity"/>
    <property type="evidence" value="ECO:0007669"/>
    <property type="project" value="RHEA"/>
</dbReference>
<dbReference type="GO" id="GO:0004386">
    <property type="term" value="F:helicase activity"/>
    <property type="evidence" value="ECO:0000250"/>
    <property type="project" value="FlyBase"/>
</dbReference>
<dbReference type="GO" id="GO:0003729">
    <property type="term" value="F:mRNA binding"/>
    <property type="evidence" value="ECO:0000318"/>
    <property type="project" value="GO_Central"/>
</dbReference>
<dbReference type="GO" id="GO:0003724">
    <property type="term" value="F:RNA helicase activity"/>
    <property type="evidence" value="ECO:0000318"/>
    <property type="project" value="GO_Central"/>
</dbReference>
<dbReference type="GO" id="GO:0008270">
    <property type="term" value="F:zinc ion binding"/>
    <property type="evidence" value="ECO:0007669"/>
    <property type="project" value="UniProtKB-KW"/>
</dbReference>
<dbReference type="GO" id="GO:0000398">
    <property type="term" value="P:mRNA splicing, via spliceosome"/>
    <property type="evidence" value="ECO:0000318"/>
    <property type="project" value="GO_Central"/>
</dbReference>
<dbReference type="GO" id="GO:0010468">
    <property type="term" value="P:regulation of gene expression"/>
    <property type="evidence" value="ECO:0007669"/>
    <property type="project" value="UniProtKB-ARBA"/>
</dbReference>
<dbReference type="CDD" id="cd17951">
    <property type="entry name" value="DEADc_DDX41"/>
    <property type="match status" value="1"/>
</dbReference>
<dbReference type="CDD" id="cd18787">
    <property type="entry name" value="SF2_C_DEAD"/>
    <property type="match status" value="1"/>
</dbReference>
<dbReference type="FunFam" id="3.40.50.300:FF:000449">
    <property type="entry name" value="Probable ATP-dependent RNA helicase DDX41"/>
    <property type="match status" value="1"/>
</dbReference>
<dbReference type="FunFam" id="3.40.50.300:FF:000657">
    <property type="entry name" value="Probable ATP-dependent RNA helicase DDX41"/>
    <property type="match status" value="1"/>
</dbReference>
<dbReference type="Gene3D" id="3.40.50.300">
    <property type="entry name" value="P-loop containing nucleotide triphosphate hydrolases"/>
    <property type="match status" value="2"/>
</dbReference>
<dbReference type="InterPro" id="IPR011545">
    <property type="entry name" value="DEAD/DEAH_box_helicase_dom"/>
</dbReference>
<dbReference type="InterPro" id="IPR044113">
    <property type="entry name" value="DEADc_DDX41"/>
</dbReference>
<dbReference type="InterPro" id="IPR014001">
    <property type="entry name" value="Helicase_ATP-bd"/>
</dbReference>
<dbReference type="InterPro" id="IPR001650">
    <property type="entry name" value="Helicase_C-like"/>
</dbReference>
<dbReference type="InterPro" id="IPR027417">
    <property type="entry name" value="P-loop_NTPase"/>
</dbReference>
<dbReference type="InterPro" id="IPR014014">
    <property type="entry name" value="RNA_helicase_DEAD_Q_motif"/>
</dbReference>
<dbReference type="InterPro" id="IPR001878">
    <property type="entry name" value="Znf_CCHC"/>
</dbReference>
<dbReference type="InterPro" id="IPR036875">
    <property type="entry name" value="Znf_CCHC_sf"/>
</dbReference>
<dbReference type="PANTHER" id="PTHR47958">
    <property type="entry name" value="ATP-DEPENDENT RNA HELICASE DBP3"/>
    <property type="match status" value="1"/>
</dbReference>
<dbReference type="Pfam" id="PF00270">
    <property type="entry name" value="DEAD"/>
    <property type="match status" value="1"/>
</dbReference>
<dbReference type="Pfam" id="PF00271">
    <property type="entry name" value="Helicase_C"/>
    <property type="match status" value="1"/>
</dbReference>
<dbReference type="SMART" id="SM00487">
    <property type="entry name" value="DEXDc"/>
    <property type="match status" value="1"/>
</dbReference>
<dbReference type="SMART" id="SM00490">
    <property type="entry name" value="HELICc"/>
    <property type="match status" value="1"/>
</dbReference>
<dbReference type="SUPFAM" id="SSF52540">
    <property type="entry name" value="P-loop containing nucleoside triphosphate hydrolases"/>
    <property type="match status" value="2"/>
</dbReference>
<dbReference type="SUPFAM" id="SSF57756">
    <property type="entry name" value="Retrovirus zinc finger-like domains"/>
    <property type="match status" value="1"/>
</dbReference>
<dbReference type="PROSITE" id="PS51192">
    <property type="entry name" value="HELICASE_ATP_BIND_1"/>
    <property type="match status" value="1"/>
</dbReference>
<dbReference type="PROSITE" id="PS51194">
    <property type="entry name" value="HELICASE_CTER"/>
    <property type="match status" value="1"/>
</dbReference>
<dbReference type="PROSITE" id="PS51195">
    <property type="entry name" value="Q_MOTIF"/>
    <property type="match status" value="1"/>
</dbReference>
<dbReference type="PROSITE" id="PS50158">
    <property type="entry name" value="ZF_CCHC"/>
    <property type="match status" value="1"/>
</dbReference>
<organism>
    <name type="scientific">Drosophila melanogaster</name>
    <name type="common">Fruit fly</name>
    <dbReference type="NCBI Taxonomy" id="7227"/>
    <lineage>
        <taxon>Eukaryota</taxon>
        <taxon>Metazoa</taxon>
        <taxon>Ecdysozoa</taxon>
        <taxon>Arthropoda</taxon>
        <taxon>Hexapoda</taxon>
        <taxon>Insecta</taxon>
        <taxon>Pterygota</taxon>
        <taxon>Neoptera</taxon>
        <taxon>Endopterygota</taxon>
        <taxon>Diptera</taxon>
        <taxon>Brachycera</taxon>
        <taxon>Muscomorpha</taxon>
        <taxon>Ephydroidea</taxon>
        <taxon>Drosophilidae</taxon>
        <taxon>Drosophila</taxon>
        <taxon>Sophophora</taxon>
    </lineage>
</organism>
<comment type="function">
    <text>ATP-dependent RNA helicase. Is essential for the directed and fasciculated early outgrowth of the bolwig nerves, as well as for its navigation at later stages. Is required during post-transcriptional gene expression. Plays a role during morphogenetic process, apoptosis and the establishment of cell polarity.</text>
</comment>
<comment type="catalytic activity">
    <reaction>
        <text>ATP + H2O = ADP + phosphate + H(+)</text>
        <dbReference type="Rhea" id="RHEA:13065"/>
        <dbReference type="ChEBI" id="CHEBI:15377"/>
        <dbReference type="ChEBI" id="CHEBI:15378"/>
        <dbReference type="ChEBI" id="CHEBI:30616"/>
        <dbReference type="ChEBI" id="CHEBI:43474"/>
        <dbReference type="ChEBI" id="CHEBI:456216"/>
        <dbReference type="EC" id="3.6.4.13"/>
    </reaction>
</comment>
<comment type="subcellular location">
    <subcellularLocation>
        <location evidence="6">Nucleus</location>
    </subcellularLocation>
</comment>
<comment type="similarity">
    <text evidence="6">Belongs to the DEAD box helicase family. DDX41 subfamily.</text>
</comment>
<proteinExistence type="evidence at protein level"/>
<sequence>MAHVKRYRRSSKSSEEGDLDNEDYVPYVPVKERKKQHMIKLGRIVQLVSETAQPKSSSENENEDDSQGAHDVETWGRKYNISLLDQHTELKKIAEAKKLSAVEKQLREEEKIMESIAQQKALMGVAELAKGIQYEQPIKTAWKPPRYIREMSEEEREAVRHELRILVEGETPSPPIRSFREMKFPKGILNGLAAKGIKNPTPIQVQGLPTVLAGRDLIGIAFTGSGKTLVFVLPVIMFALEQEYSLPFERNEGPYGLIICPSRELAKQTHEIIQHYSKHLQACGMPEIRSCLAMGGLPVSEALDVISRGVHIVVATPGRLMDMLDKKILTLDMCRYLCMDEADRMIDMGFEEDVRTIFSFFKGQRQTLLFSATMPKKIQNFARSALVKPVTINVGRAGAASMNVTQQVEYVKQEAKVVYLLDCLQKTAPPVLIFAEKKQDVDCIHEYLLLKGVEAVAIHGGKDQEERSRAVDAYRVGKKDVLVATDVASKGLDFPNVQHVINYDMPDDIENYVHRIGRTGRSNTKGLATTLINKTTEQSVLLDLKHLLIEGKQEVPDFLDELAPETEHQHLDLGDSHGCTYCGGLGHRITECPKLEAVQNKQASNIGRRDYLSNTAADY</sequence>